<reference key="1">
    <citation type="journal article" date="2005" name="PLoS Genet.">
        <title>Life in hot carbon monoxide: the complete genome sequence of Carboxydothermus hydrogenoformans Z-2901.</title>
        <authorList>
            <person name="Wu M."/>
            <person name="Ren Q."/>
            <person name="Durkin A.S."/>
            <person name="Daugherty S.C."/>
            <person name="Brinkac L.M."/>
            <person name="Dodson R.J."/>
            <person name="Madupu R."/>
            <person name="Sullivan S.A."/>
            <person name="Kolonay J.F."/>
            <person name="Nelson W.C."/>
            <person name="Tallon L.J."/>
            <person name="Jones K.M."/>
            <person name="Ulrich L.E."/>
            <person name="Gonzalez J.M."/>
            <person name="Zhulin I.B."/>
            <person name="Robb F.T."/>
            <person name="Eisen J.A."/>
        </authorList>
    </citation>
    <scope>NUCLEOTIDE SEQUENCE [LARGE SCALE GENOMIC DNA]</scope>
    <source>
        <strain>ATCC BAA-161 / DSM 6008 / Z-2901</strain>
    </source>
</reference>
<gene>
    <name type="ordered locus">CHY_0442</name>
</gene>
<organism>
    <name type="scientific">Carboxydothermus hydrogenoformans (strain ATCC BAA-161 / DSM 6008 / Z-2901)</name>
    <dbReference type="NCBI Taxonomy" id="246194"/>
    <lineage>
        <taxon>Bacteria</taxon>
        <taxon>Bacillati</taxon>
        <taxon>Bacillota</taxon>
        <taxon>Clostridia</taxon>
        <taxon>Thermoanaerobacterales</taxon>
        <taxon>Thermoanaerobacteraceae</taxon>
        <taxon>Carboxydothermus</taxon>
    </lineage>
</organism>
<feature type="chain" id="PRO_0000316657" description="Putative pyruvate, phosphate dikinase regulatory protein">
    <location>
        <begin position="1"/>
        <end position="277"/>
    </location>
</feature>
<feature type="binding site" evidence="1">
    <location>
        <begin position="156"/>
        <end position="163"/>
    </location>
    <ligand>
        <name>ADP</name>
        <dbReference type="ChEBI" id="CHEBI:456216"/>
    </ligand>
</feature>
<dbReference type="EC" id="2.7.11.32" evidence="1"/>
<dbReference type="EC" id="2.7.4.27" evidence="1"/>
<dbReference type="EMBL" id="CP000141">
    <property type="protein sequence ID" value="ABB15548.1"/>
    <property type="molecule type" value="Genomic_DNA"/>
</dbReference>
<dbReference type="RefSeq" id="WP_011343379.1">
    <property type="nucleotide sequence ID" value="NC_007503.1"/>
</dbReference>
<dbReference type="SMR" id="Q3AEY1"/>
<dbReference type="FunCoup" id="Q3AEY1">
    <property type="interactions" value="158"/>
</dbReference>
<dbReference type="STRING" id="246194.CHY_0442"/>
<dbReference type="KEGG" id="chy:CHY_0442"/>
<dbReference type="eggNOG" id="COG1806">
    <property type="taxonomic scope" value="Bacteria"/>
</dbReference>
<dbReference type="HOGENOM" id="CLU_046206_2_1_9"/>
<dbReference type="InParanoid" id="Q3AEY1"/>
<dbReference type="OrthoDB" id="9782201at2"/>
<dbReference type="Proteomes" id="UP000002706">
    <property type="component" value="Chromosome"/>
</dbReference>
<dbReference type="GO" id="GO:0043531">
    <property type="term" value="F:ADP binding"/>
    <property type="evidence" value="ECO:0007669"/>
    <property type="project" value="UniProtKB-UniRule"/>
</dbReference>
<dbReference type="GO" id="GO:0005524">
    <property type="term" value="F:ATP binding"/>
    <property type="evidence" value="ECO:0007669"/>
    <property type="project" value="InterPro"/>
</dbReference>
<dbReference type="GO" id="GO:0016776">
    <property type="term" value="F:phosphotransferase activity, phosphate group as acceptor"/>
    <property type="evidence" value="ECO:0007669"/>
    <property type="project" value="UniProtKB-UniRule"/>
</dbReference>
<dbReference type="GO" id="GO:0004674">
    <property type="term" value="F:protein serine/threonine kinase activity"/>
    <property type="evidence" value="ECO:0007669"/>
    <property type="project" value="UniProtKB-UniRule"/>
</dbReference>
<dbReference type="HAMAP" id="MF_00921">
    <property type="entry name" value="PDRP"/>
    <property type="match status" value="1"/>
</dbReference>
<dbReference type="InterPro" id="IPR005177">
    <property type="entry name" value="Kinase-pyrophosphorylase"/>
</dbReference>
<dbReference type="InterPro" id="IPR026565">
    <property type="entry name" value="PPDK_reg"/>
</dbReference>
<dbReference type="NCBIfam" id="NF003742">
    <property type="entry name" value="PRK05339.1"/>
    <property type="match status" value="1"/>
</dbReference>
<dbReference type="PANTHER" id="PTHR31756">
    <property type="entry name" value="PYRUVATE, PHOSPHATE DIKINASE REGULATORY PROTEIN 1, CHLOROPLASTIC"/>
    <property type="match status" value="1"/>
</dbReference>
<dbReference type="PANTHER" id="PTHR31756:SF3">
    <property type="entry name" value="PYRUVATE, PHOSPHATE DIKINASE REGULATORY PROTEIN 1, CHLOROPLASTIC"/>
    <property type="match status" value="1"/>
</dbReference>
<dbReference type="Pfam" id="PF03618">
    <property type="entry name" value="Kinase-PPPase"/>
    <property type="match status" value="1"/>
</dbReference>
<proteinExistence type="inferred from homology"/>
<evidence type="ECO:0000255" key="1">
    <source>
        <dbReference type="HAMAP-Rule" id="MF_00921"/>
    </source>
</evidence>
<protein>
    <recommendedName>
        <fullName evidence="1">Putative pyruvate, phosphate dikinase regulatory protein</fullName>
        <shortName evidence="1">PPDK regulatory protein</shortName>
        <ecNumber evidence="1">2.7.11.32</ecNumber>
        <ecNumber evidence="1">2.7.4.27</ecNumber>
    </recommendedName>
</protein>
<keyword id="KW-0418">Kinase</keyword>
<keyword id="KW-0547">Nucleotide-binding</keyword>
<keyword id="KW-1185">Reference proteome</keyword>
<keyword id="KW-0723">Serine/threonine-protein kinase</keyword>
<keyword id="KW-0808">Transferase</keyword>
<name>PDRP_CARHZ</name>
<accession>Q3AEY1</accession>
<sequence length="277" mass="30772">MAINLKLEQIPVVYILSDSIGETGEVVAKAAASQFDSGRVDIRRVPYLSSVREVEEALQEAESAGALVVYTLVRPDLKEYLEKRAHELSLPHVDIMGPMLEGLKQITKQNPKYQPGLIRKMDEAYFSKVEAIEFAVKYDDGKEPRGLLRADLVVIGVSRTSKTPLCMYLAHKGIKAANVPLVPEATPPEELFKIPPHKVVGLTIKPSILFEIRKERLKTLGLSQTADYANMERILMELDYALGIMKKIGCAVIDVSNKAVEETAARVLEIYRKGVGR</sequence>
<comment type="function">
    <text evidence="1">Bifunctional serine/threonine kinase and phosphorylase involved in the regulation of the pyruvate, phosphate dikinase (PPDK) by catalyzing its phosphorylation/dephosphorylation.</text>
</comment>
<comment type="catalytic activity">
    <reaction evidence="1">
        <text>N(tele)-phospho-L-histidyl/L-threonyl-[pyruvate, phosphate dikinase] + ADP = N(tele)-phospho-L-histidyl/O-phospho-L-threonyl-[pyruvate, phosphate dikinase] + AMP + H(+)</text>
        <dbReference type="Rhea" id="RHEA:43692"/>
        <dbReference type="Rhea" id="RHEA-COMP:10650"/>
        <dbReference type="Rhea" id="RHEA-COMP:10651"/>
        <dbReference type="ChEBI" id="CHEBI:15378"/>
        <dbReference type="ChEBI" id="CHEBI:30013"/>
        <dbReference type="ChEBI" id="CHEBI:61977"/>
        <dbReference type="ChEBI" id="CHEBI:83586"/>
        <dbReference type="ChEBI" id="CHEBI:456215"/>
        <dbReference type="ChEBI" id="CHEBI:456216"/>
        <dbReference type="EC" id="2.7.11.32"/>
    </reaction>
</comment>
<comment type="catalytic activity">
    <reaction evidence="1">
        <text>N(tele)-phospho-L-histidyl/O-phospho-L-threonyl-[pyruvate, phosphate dikinase] + phosphate + H(+) = N(tele)-phospho-L-histidyl/L-threonyl-[pyruvate, phosphate dikinase] + diphosphate</text>
        <dbReference type="Rhea" id="RHEA:43696"/>
        <dbReference type="Rhea" id="RHEA-COMP:10650"/>
        <dbReference type="Rhea" id="RHEA-COMP:10651"/>
        <dbReference type="ChEBI" id="CHEBI:15378"/>
        <dbReference type="ChEBI" id="CHEBI:30013"/>
        <dbReference type="ChEBI" id="CHEBI:33019"/>
        <dbReference type="ChEBI" id="CHEBI:43474"/>
        <dbReference type="ChEBI" id="CHEBI:61977"/>
        <dbReference type="ChEBI" id="CHEBI:83586"/>
        <dbReference type="EC" id="2.7.4.27"/>
    </reaction>
</comment>
<comment type="similarity">
    <text evidence="1">Belongs to the pyruvate, phosphate/water dikinase regulatory protein family. PDRP subfamily.</text>
</comment>